<keyword id="KW-0963">Cytoplasm</keyword>
<keyword id="KW-0664">Pyridoxine biosynthesis</keyword>
<keyword id="KW-1185">Reference proteome</keyword>
<keyword id="KW-0808">Transferase</keyword>
<gene>
    <name evidence="1" type="primary">pdxJ</name>
    <name type="ordered locus">CC_1557</name>
</gene>
<name>PDXJ_CAUVC</name>
<organism>
    <name type="scientific">Caulobacter vibrioides (strain ATCC 19089 / CIP 103742 / CB 15)</name>
    <name type="common">Caulobacter crescentus</name>
    <dbReference type="NCBI Taxonomy" id="190650"/>
    <lineage>
        <taxon>Bacteria</taxon>
        <taxon>Pseudomonadati</taxon>
        <taxon>Pseudomonadota</taxon>
        <taxon>Alphaproteobacteria</taxon>
        <taxon>Caulobacterales</taxon>
        <taxon>Caulobacteraceae</taxon>
        <taxon>Caulobacter</taxon>
    </lineage>
</organism>
<proteinExistence type="inferred from homology"/>
<accession>Q9A808</accession>
<protein>
    <recommendedName>
        <fullName evidence="1">Pyridoxine 5'-phosphate synthase</fullName>
        <shortName evidence="1">PNP synthase</shortName>
        <ecNumber evidence="1">2.6.99.2</ecNumber>
    </recommendedName>
</protein>
<sequence length="254" mass="27131">MSLRLGVNIDHVATIRNARGASYPEPVRAAELALIAGADGITAHLREDRRHISDADIAVLTDLCHKRGKPLNFEMAVTDEMVGIALNARPHAACLVPERREEVTTEGGLDVIKGQKRIADATARLRTVGARVSLFIEPDPDQIRACVTAGAQVVELHTGAYCDAARAGETARAEAILKRLKAGAALAHELGLEVHAGHGIDYATVKPVAAIPQIAELNIGHFLIGEAIFVGLPEAIHRMRALMEAARVELEVLA</sequence>
<dbReference type="EC" id="2.6.99.2" evidence="1"/>
<dbReference type="EMBL" id="AE005673">
    <property type="protein sequence ID" value="AAK23536.1"/>
    <property type="molecule type" value="Genomic_DNA"/>
</dbReference>
<dbReference type="PIR" id="D87442">
    <property type="entry name" value="D87442"/>
</dbReference>
<dbReference type="RefSeq" id="NP_420368.1">
    <property type="nucleotide sequence ID" value="NC_002696.2"/>
</dbReference>
<dbReference type="RefSeq" id="WP_010919431.1">
    <property type="nucleotide sequence ID" value="NC_002696.2"/>
</dbReference>
<dbReference type="SMR" id="Q9A808"/>
<dbReference type="STRING" id="190650.CC_1557"/>
<dbReference type="EnsemblBacteria" id="AAK23536">
    <property type="protein sequence ID" value="AAK23536"/>
    <property type="gene ID" value="CC_1557"/>
</dbReference>
<dbReference type="KEGG" id="ccr:CC_1557"/>
<dbReference type="PATRIC" id="fig|190650.5.peg.1585"/>
<dbReference type="eggNOG" id="COG0854">
    <property type="taxonomic scope" value="Bacteria"/>
</dbReference>
<dbReference type="HOGENOM" id="CLU_074563_0_0_5"/>
<dbReference type="BioCyc" id="CAULO:CC1557-MONOMER"/>
<dbReference type="UniPathway" id="UPA00244">
    <property type="reaction ID" value="UER00313"/>
</dbReference>
<dbReference type="Proteomes" id="UP000001816">
    <property type="component" value="Chromosome"/>
</dbReference>
<dbReference type="GO" id="GO:0005829">
    <property type="term" value="C:cytosol"/>
    <property type="evidence" value="ECO:0007669"/>
    <property type="project" value="TreeGrafter"/>
</dbReference>
<dbReference type="GO" id="GO:0033856">
    <property type="term" value="F:pyridoxine 5'-phosphate synthase activity"/>
    <property type="evidence" value="ECO:0007669"/>
    <property type="project" value="UniProtKB-EC"/>
</dbReference>
<dbReference type="GO" id="GO:0008615">
    <property type="term" value="P:pyridoxine biosynthetic process"/>
    <property type="evidence" value="ECO:0007669"/>
    <property type="project" value="UniProtKB-UniRule"/>
</dbReference>
<dbReference type="CDD" id="cd00003">
    <property type="entry name" value="PNPsynthase"/>
    <property type="match status" value="1"/>
</dbReference>
<dbReference type="Gene3D" id="3.20.20.70">
    <property type="entry name" value="Aldolase class I"/>
    <property type="match status" value="1"/>
</dbReference>
<dbReference type="HAMAP" id="MF_00279">
    <property type="entry name" value="PdxJ"/>
    <property type="match status" value="1"/>
</dbReference>
<dbReference type="InterPro" id="IPR013785">
    <property type="entry name" value="Aldolase_TIM"/>
</dbReference>
<dbReference type="InterPro" id="IPR004569">
    <property type="entry name" value="PyrdxlP_synth_PdxJ"/>
</dbReference>
<dbReference type="InterPro" id="IPR036130">
    <property type="entry name" value="Pyridoxine-5'_phos_synth"/>
</dbReference>
<dbReference type="NCBIfam" id="TIGR00559">
    <property type="entry name" value="pdxJ"/>
    <property type="match status" value="1"/>
</dbReference>
<dbReference type="NCBIfam" id="NF003624">
    <property type="entry name" value="PRK05265.1-2"/>
    <property type="match status" value="1"/>
</dbReference>
<dbReference type="NCBIfam" id="NF003625">
    <property type="entry name" value="PRK05265.1-3"/>
    <property type="match status" value="1"/>
</dbReference>
<dbReference type="NCBIfam" id="NF003627">
    <property type="entry name" value="PRK05265.1-5"/>
    <property type="match status" value="1"/>
</dbReference>
<dbReference type="PANTHER" id="PTHR30456">
    <property type="entry name" value="PYRIDOXINE 5'-PHOSPHATE SYNTHASE"/>
    <property type="match status" value="1"/>
</dbReference>
<dbReference type="PANTHER" id="PTHR30456:SF0">
    <property type="entry name" value="PYRIDOXINE 5'-PHOSPHATE SYNTHASE"/>
    <property type="match status" value="1"/>
</dbReference>
<dbReference type="Pfam" id="PF03740">
    <property type="entry name" value="PdxJ"/>
    <property type="match status" value="1"/>
</dbReference>
<dbReference type="SUPFAM" id="SSF63892">
    <property type="entry name" value="Pyridoxine 5'-phosphate synthase"/>
    <property type="match status" value="1"/>
</dbReference>
<feature type="chain" id="PRO_0000190112" description="Pyridoxine 5'-phosphate synthase">
    <location>
        <begin position="1"/>
        <end position="254"/>
    </location>
</feature>
<feature type="active site" description="Proton acceptor" evidence="1">
    <location>
        <position position="44"/>
    </location>
</feature>
<feature type="active site" description="Proton acceptor" evidence="1">
    <location>
        <position position="74"/>
    </location>
</feature>
<feature type="active site" description="Proton donor" evidence="1">
    <location>
        <position position="198"/>
    </location>
</feature>
<feature type="binding site" evidence="1">
    <location>
        <position position="8"/>
    </location>
    <ligand>
        <name>3-amino-2-oxopropyl phosphate</name>
        <dbReference type="ChEBI" id="CHEBI:57279"/>
    </ligand>
</feature>
<feature type="binding site" evidence="1">
    <location>
        <begin position="10"/>
        <end position="11"/>
    </location>
    <ligand>
        <name>1-deoxy-D-xylulose 5-phosphate</name>
        <dbReference type="ChEBI" id="CHEBI:57792"/>
    </ligand>
</feature>
<feature type="binding site" evidence="1">
    <location>
        <position position="19"/>
    </location>
    <ligand>
        <name>3-amino-2-oxopropyl phosphate</name>
        <dbReference type="ChEBI" id="CHEBI:57279"/>
    </ligand>
</feature>
<feature type="binding site" evidence="1">
    <location>
        <position position="46"/>
    </location>
    <ligand>
        <name>1-deoxy-D-xylulose 5-phosphate</name>
        <dbReference type="ChEBI" id="CHEBI:57792"/>
    </ligand>
</feature>
<feature type="binding site" evidence="1">
    <location>
        <position position="51"/>
    </location>
    <ligand>
        <name>1-deoxy-D-xylulose 5-phosphate</name>
        <dbReference type="ChEBI" id="CHEBI:57792"/>
    </ligand>
</feature>
<feature type="binding site" evidence="1">
    <location>
        <position position="104"/>
    </location>
    <ligand>
        <name>1-deoxy-D-xylulose 5-phosphate</name>
        <dbReference type="ChEBI" id="CHEBI:57792"/>
    </ligand>
</feature>
<feature type="binding site" evidence="1">
    <location>
        <position position="199"/>
    </location>
    <ligand>
        <name>3-amino-2-oxopropyl phosphate</name>
        <dbReference type="ChEBI" id="CHEBI:57279"/>
    </ligand>
</feature>
<feature type="binding site" evidence="1">
    <location>
        <begin position="220"/>
        <end position="221"/>
    </location>
    <ligand>
        <name>3-amino-2-oxopropyl phosphate</name>
        <dbReference type="ChEBI" id="CHEBI:57279"/>
    </ligand>
</feature>
<feature type="site" description="Transition state stabilizer" evidence="1">
    <location>
        <position position="155"/>
    </location>
</feature>
<evidence type="ECO:0000255" key="1">
    <source>
        <dbReference type="HAMAP-Rule" id="MF_00279"/>
    </source>
</evidence>
<comment type="function">
    <text evidence="1">Catalyzes the complicated ring closure reaction between the two acyclic compounds 1-deoxy-D-xylulose-5-phosphate (DXP) and 3-amino-2-oxopropyl phosphate (1-amino-acetone-3-phosphate or AAP) to form pyridoxine 5'-phosphate (PNP) and inorganic phosphate.</text>
</comment>
<comment type="catalytic activity">
    <reaction evidence="1">
        <text>3-amino-2-oxopropyl phosphate + 1-deoxy-D-xylulose 5-phosphate = pyridoxine 5'-phosphate + phosphate + 2 H2O + H(+)</text>
        <dbReference type="Rhea" id="RHEA:15265"/>
        <dbReference type="ChEBI" id="CHEBI:15377"/>
        <dbReference type="ChEBI" id="CHEBI:15378"/>
        <dbReference type="ChEBI" id="CHEBI:43474"/>
        <dbReference type="ChEBI" id="CHEBI:57279"/>
        <dbReference type="ChEBI" id="CHEBI:57792"/>
        <dbReference type="ChEBI" id="CHEBI:58589"/>
        <dbReference type="EC" id="2.6.99.2"/>
    </reaction>
</comment>
<comment type="pathway">
    <text evidence="1">Cofactor biosynthesis; pyridoxine 5'-phosphate biosynthesis; pyridoxine 5'-phosphate from D-erythrose 4-phosphate: step 5/5.</text>
</comment>
<comment type="subunit">
    <text evidence="1">Homooctamer; tetramer of dimers.</text>
</comment>
<comment type="subcellular location">
    <subcellularLocation>
        <location evidence="1">Cytoplasm</location>
    </subcellularLocation>
</comment>
<comment type="similarity">
    <text evidence="1">Belongs to the PNP synthase family.</text>
</comment>
<reference key="1">
    <citation type="journal article" date="2001" name="Proc. Natl. Acad. Sci. U.S.A.">
        <title>Complete genome sequence of Caulobacter crescentus.</title>
        <authorList>
            <person name="Nierman W.C."/>
            <person name="Feldblyum T.V."/>
            <person name="Laub M.T."/>
            <person name="Paulsen I.T."/>
            <person name="Nelson K.E."/>
            <person name="Eisen J.A."/>
            <person name="Heidelberg J.F."/>
            <person name="Alley M.R.K."/>
            <person name="Ohta N."/>
            <person name="Maddock J.R."/>
            <person name="Potocka I."/>
            <person name="Nelson W.C."/>
            <person name="Newton A."/>
            <person name="Stephens C."/>
            <person name="Phadke N.D."/>
            <person name="Ely B."/>
            <person name="DeBoy R.T."/>
            <person name="Dodson R.J."/>
            <person name="Durkin A.S."/>
            <person name="Gwinn M.L."/>
            <person name="Haft D.H."/>
            <person name="Kolonay J.F."/>
            <person name="Smit J."/>
            <person name="Craven M.B."/>
            <person name="Khouri H.M."/>
            <person name="Shetty J."/>
            <person name="Berry K.J."/>
            <person name="Utterback T.R."/>
            <person name="Tran K."/>
            <person name="Wolf A.M."/>
            <person name="Vamathevan J.J."/>
            <person name="Ermolaeva M.D."/>
            <person name="White O."/>
            <person name="Salzberg S.L."/>
            <person name="Venter J.C."/>
            <person name="Shapiro L."/>
            <person name="Fraser C.M."/>
        </authorList>
    </citation>
    <scope>NUCLEOTIDE SEQUENCE [LARGE SCALE GENOMIC DNA]</scope>
    <source>
        <strain>ATCC 19089 / CIP 103742 / CB 15</strain>
    </source>
</reference>